<proteinExistence type="inferred from homology"/>
<evidence type="ECO:0000255" key="1">
    <source>
        <dbReference type="HAMAP-Rule" id="MF_00377"/>
    </source>
</evidence>
<accession>C4K1R9</accession>
<feature type="chain" id="PRO_1000205662" description="Chromosomal replication initiator protein DnaA">
    <location>
        <begin position="1"/>
        <end position="463"/>
    </location>
</feature>
<feature type="region of interest" description="Domain I, interacts with DnaA modulators" evidence="1">
    <location>
        <begin position="1"/>
        <end position="83"/>
    </location>
</feature>
<feature type="region of interest" description="Domain II" evidence="1">
    <location>
        <begin position="83"/>
        <end position="124"/>
    </location>
</feature>
<feature type="region of interest" description="Domain III, AAA+ region" evidence="1">
    <location>
        <begin position="125"/>
        <end position="343"/>
    </location>
</feature>
<feature type="region of interest" description="Domain IV, binds dsDNA" evidence="1">
    <location>
        <begin position="344"/>
        <end position="463"/>
    </location>
</feature>
<feature type="binding site" evidence="1">
    <location>
        <position position="171"/>
    </location>
    <ligand>
        <name>ATP</name>
        <dbReference type="ChEBI" id="CHEBI:30616"/>
    </ligand>
</feature>
<feature type="binding site" evidence="1">
    <location>
        <position position="173"/>
    </location>
    <ligand>
        <name>ATP</name>
        <dbReference type="ChEBI" id="CHEBI:30616"/>
    </ligand>
</feature>
<feature type="binding site" evidence="1">
    <location>
        <position position="174"/>
    </location>
    <ligand>
        <name>ATP</name>
        <dbReference type="ChEBI" id="CHEBI:30616"/>
    </ligand>
</feature>
<feature type="binding site" evidence="1">
    <location>
        <position position="175"/>
    </location>
    <ligand>
        <name>ATP</name>
        <dbReference type="ChEBI" id="CHEBI:30616"/>
    </ligand>
</feature>
<gene>
    <name evidence="1" type="primary">dnaA</name>
    <name type="ordered locus">RPR_04110</name>
</gene>
<name>DNAA_RICPU</name>
<comment type="function">
    <text evidence="1">Plays an essential role in the initiation and regulation of chromosomal replication. ATP-DnaA binds to the origin of replication (oriC) to initiate formation of the DNA replication initiation complex once per cell cycle. Binds the DnaA box (a 9 base pair repeat at the origin) and separates the double-stranded (ds)DNA. Forms a right-handed helical filament on oriC DNA; dsDNA binds to the exterior of the filament while single-stranded (ss)DNA is stabiized in the filament's interior. The ATP-DnaA-oriC complex binds and stabilizes one strand of the AT-rich DNA unwinding element (DUE), permitting loading of DNA polymerase. After initiation quickly degrades to an ADP-DnaA complex that is not apt for DNA replication. Binds acidic phospholipids.</text>
</comment>
<comment type="subunit">
    <text evidence="1">Oligomerizes as a right-handed, spiral filament on DNA at oriC.</text>
</comment>
<comment type="subcellular location">
    <subcellularLocation>
        <location evidence="1">Cytoplasm</location>
    </subcellularLocation>
</comment>
<comment type="domain">
    <text evidence="1">Domain I is involved in oligomerization and binding regulators, domain II is flexibile and of varying length in different bacteria, domain III forms the AAA+ region, while domain IV binds dsDNA.</text>
</comment>
<comment type="similarity">
    <text evidence="1">Belongs to the DnaA family.</text>
</comment>
<sequence>MSTNQIILTDQGDNYVNVWSHVAQDLYNHYGETLYNSWFSKVNFIESSLNTVILCAPTNFVRDWIKSKYSMVILQLFQHYNNTIKSIEIITKELPGTTQTVTELPTKTFADIGSSELNSENIFSTLDARFTFDNFVVGAPNELAYAAARAVAESSGAVSESNPLFLYGGVGLGKTHLMHAIGWYIKQHNPSRKVIYMSAEKFMYQFVKALRNKEVISFKEKFRSVDVLMIDDIQFICGKDSTQEEFFHTFNTLIDNNRQMVISCDRSPSDLDNIEDRIKSRLGWGLVADVHSTTYELRLGILESKIEQMNVKIPKDVIDFLASKIVSNVRELEGALNKVIAHSNFTLKEITLENTQNILRDLLRSNERIITVEDIQKKVASRYNIKLSDMSSSRRLREVARPRQIAMYLSKALTPKSLADIGKKFGKKDHTTVMHAIKKVEELLENDIELREEINLLMKILQN</sequence>
<protein>
    <recommendedName>
        <fullName evidence="1">Chromosomal replication initiator protein DnaA</fullName>
    </recommendedName>
</protein>
<organism>
    <name type="scientific">Rickettsia peacockii (strain Rustic)</name>
    <dbReference type="NCBI Taxonomy" id="562019"/>
    <lineage>
        <taxon>Bacteria</taxon>
        <taxon>Pseudomonadati</taxon>
        <taxon>Pseudomonadota</taxon>
        <taxon>Alphaproteobacteria</taxon>
        <taxon>Rickettsiales</taxon>
        <taxon>Rickettsiaceae</taxon>
        <taxon>Rickettsieae</taxon>
        <taxon>Rickettsia</taxon>
        <taxon>spotted fever group</taxon>
    </lineage>
</organism>
<dbReference type="EMBL" id="CP001227">
    <property type="protein sequence ID" value="ACR47519.1"/>
    <property type="molecule type" value="Genomic_DNA"/>
</dbReference>
<dbReference type="RefSeq" id="WP_012736748.1">
    <property type="nucleotide sequence ID" value="NC_012730.1"/>
</dbReference>
<dbReference type="SMR" id="C4K1R9"/>
<dbReference type="KEGG" id="rpk:RPR_04110"/>
<dbReference type="HOGENOM" id="CLU_026910_3_0_5"/>
<dbReference type="Proteomes" id="UP000005015">
    <property type="component" value="Chromosome"/>
</dbReference>
<dbReference type="GO" id="GO:0005737">
    <property type="term" value="C:cytoplasm"/>
    <property type="evidence" value="ECO:0007669"/>
    <property type="project" value="UniProtKB-SubCell"/>
</dbReference>
<dbReference type="GO" id="GO:0005886">
    <property type="term" value="C:plasma membrane"/>
    <property type="evidence" value="ECO:0007669"/>
    <property type="project" value="TreeGrafter"/>
</dbReference>
<dbReference type="GO" id="GO:0005524">
    <property type="term" value="F:ATP binding"/>
    <property type="evidence" value="ECO:0007669"/>
    <property type="project" value="UniProtKB-UniRule"/>
</dbReference>
<dbReference type="GO" id="GO:0016887">
    <property type="term" value="F:ATP hydrolysis activity"/>
    <property type="evidence" value="ECO:0007669"/>
    <property type="project" value="InterPro"/>
</dbReference>
<dbReference type="GO" id="GO:0003688">
    <property type="term" value="F:DNA replication origin binding"/>
    <property type="evidence" value="ECO:0007669"/>
    <property type="project" value="UniProtKB-UniRule"/>
</dbReference>
<dbReference type="GO" id="GO:0008289">
    <property type="term" value="F:lipid binding"/>
    <property type="evidence" value="ECO:0007669"/>
    <property type="project" value="UniProtKB-KW"/>
</dbReference>
<dbReference type="GO" id="GO:0006270">
    <property type="term" value="P:DNA replication initiation"/>
    <property type="evidence" value="ECO:0007669"/>
    <property type="project" value="UniProtKB-UniRule"/>
</dbReference>
<dbReference type="GO" id="GO:0006275">
    <property type="term" value="P:regulation of DNA replication"/>
    <property type="evidence" value="ECO:0007669"/>
    <property type="project" value="UniProtKB-UniRule"/>
</dbReference>
<dbReference type="CDD" id="cd00009">
    <property type="entry name" value="AAA"/>
    <property type="match status" value="1"/>
</dbReference>
<dbReference type="CDD" id="cd06571">
    <property type="entry name" value="Bac_DnaA_C"/>
    <property type="match status" value="1"/>
</dbReference>
<dbReference type="FunFam" id="3.40.50.300:FF:000668">
    <property type="entry name" value="Chromosomal replication initiator protein DnaA"/>
    <property type="match status" value="1"/>
</dbReference>
<dbReference type="Gene3D" id="1.10.1750.10">
    <property type="match status" value="1"/>
</dbReference>
<dbReference type="Gene3D" id="1.10.8.60">
    <property type="match status" value="1"/>
</dbReference>
<dbReference type="Gene3D" id="3.30.300.180">
    <property type="match status" value="1"/>
</dbReference>
<dbReference type="Gene3D" id="3.40.50.300">
    <property type="entry name" value="P-loop containing nucleotide triphosphate hydrolases"/>
    <property type="match status" value="1"/>
</dbReference>
<dbReference type="HAMAP" id="MF_00377">
    <property type="entry name" value="DnaA_bact"/>
    <property type="match status" value="1"/>
</dbReference>
<dbReference type="InterPro" id="IPR003593">
    <property type="entry name" value="AAA+_ATPase"/>
</dbReference>
<dbReference type="InterPro" id="IPR001957">
    <property type="entry name" value="Chromosome_initiator_DnaA"/>
</dbReference>
<dbReference type="InterPro" id="IPR020591">
    <property type="entry name" value="Chromosome_initiator_DnaA-like"/>
</dbReference>
<dbReference type="InterPro" id="IPR018312">
    <property type="entry name" value="Chromosome_initiator_DnaA_CS"/>
</dbReference>
<dbReference type="InterPro" id="IPR013159">
    <property type="entry name" value="DnaA_C"/>
</dbReference>
<dbReference type="InterPro" id="IPR013317">
    <property type="entry name" value="DnaA_dom"/>
</dbReference>
<dbReference type="InterPro" id="IPR024633">
    <property type="entry name" value="DnaA_N_dom"/>
</dbReference>
<dbReference type="InterPro" id="IPR038454">
    <property type="entry name" value="DnaA_N_sf"/>
</dbReference>
<dbReference type="InterPro" id="IPR027417">
    <property type="entry name" value="P-loop_NTPase"/>
</dbReference>
<dbReference type="InterPro" id="IPR010921">
    <property type="entry name" value="Trp_repressor/repl_initiator"/>
</dbReference>
<dbReference type="NCBIfam" id="TIGR00362">
    <property type="entry name" value="DnaA"/>
    <property type="match status" value="1"/>
</dbReference>
<dbReference type="PANTHER" id="PTHR30050">
    <property type="entry name" value="CHROMOSOMAL REPLICATION INITIATOR PROTEIN DNAA"/>
    <property type="match status" value="1"/>
</dbReference>
<dbReference type="PANTHER" id="PTHR30050:SF2">
    <property type="entry name" value="CHROMOSOMAL REPLICATION INITIATOR PROTEIN DNAA"/>
    <property type="match status" value="1"/>
</dbReference>
<dbReference type="Pfam" id="PF00308">
    <property type="entry name" value="Bac_DnaA"/>
    <property type="match status" value="1"/>
</dbReference>
<dbReference type="Pfam" id="PF08299">
    <property type="entry name" value="Bac_DnaA_C"/>
    <property type="match status" value="1"/>
</dbReference>
<dbReference type="Pfam" id="PF11638">
    <property type="entry name" value="DnaA_N"/>
    <property type="match status" value="1"/>
</dbReference>
<dbReference type="PRINTS" id="PR00051">
    <property type="entry name" value="DNAA"/>
</dbReference>
<dbReference type="SMART" id="SM00382">
    <property type="entry name" value="AAA"/>
    <property type="match status" value="1"/>
</dbReference>
<dbReference type="SMART" id="SM00760">
    <property type="entry name" value="Bac_DnaA_C"/>
    <property type="match status" value="1"/>
</dbReference>
<dbReference type="SUPFAM" id="SSF52540">
    <property type="entry name" value="P-loop containing nucleoside triphosphate hydrolases"/>
    <property type="match status" value="1"/>
</dbReference>
<dbReference type="SUPFAM" id="SSF48295">
    <property type="entry name" value="TrpR-like"/>
    <property type="match status" value="1"/>
</dbReference>
<dbReference type="PROSITE" id="PS01008">
    <property type="entry name" value="DNAA"/>
    <property type="match status" value="1"/>
</dbReference>
<reference key="1">
    <citation type="journal article" date="2009" name="PLoS ONE">
        <title>Genome sequence of the endosymbiont Rickettsia peacockii and comparison with virulent Rickettsia rickettsii: identification of virulence factors.</title>
        <authorList>
            <person name="Felsheim R.F."/>
            <person name="Kurtti T.J."/>
            <person name="Munderloh U.G."/>
        </authorList>
    </citation>
    <scope>NUCLEOTIDE SEQUENCE [LARGE SCALE GENOMIC DNA]</scope>
    <source>
        <strain>Rustic</strain>
    </source>
</reference>
<keyword id="KW-0067">ATP-binding</keyword>
<keyword id="KW-0963">Cytoplasm</keyword>
<keyword id="KW-0235">DNA replication</keyword>
<keyword id="KW-0238">DNA-binding</keyword>
<keyword id="KW-0446">Lipid-binding</keyword>
<keyword id="KW-0547">Nucleotide-binding</keyword>